<organism>
    <name type="scientific">Sporosarcina globispora</name>
    <name type="common">Bacillus globisporus</name>
    <dbReference type="NCBI Taxonomy" id="1459"/>
    <lineage>
        <taxon>Bacteria</taxon>
        <taxon>Bacillati</taxon>
        <taxon>Bacillota</taxon>
        <taxon>Bacilli</taxon>
        <taxon>Bacillales</taxon>
        <taxon>Caryophanaceae</taxon>
        <taxon>Sporosarcina</taxon>
    </lineage>
</organism>
<proteinExistence type="evidence at protein level"/>
<keyword id="KW-0119">Carbohydrate metabolism</keyword>
<keyword id="KW-0903">Direct protein sequencing</keyword>
<keyword id="KW-0328">Glycosyltransferase</keyword>
<keyword id="KW-0677">Repeat</keyword>
<keyword id="KW-0964">Secreted</keyword>
<keyword id="KW-0732">Signal</keyword>
<keyword id="KW-0808">Transferase</keyword>
<sequence>MRPPNKEIPRILAFFTAFTLFGSTLALLPAPPAHAYVSSLGNLISSSVTGDTLTLTVDNGAEPSDDLLIVQAVQNGILKVDYRPNSITPSAKTPMLDPNKTWSAVGATINTTANPMTITTSNMKIEITKNPVRMTVKKADGTTLFWEPSGGGVFSDGVRFLHATGDNMYGIRSFNAFDSGGDLLRNSSNHAAHAGEQGDSGGPLIWSTAGYGLLVDSDGGYPYTDSTTGQMEFYYGGTPPEGRRYAKQNVEYYIMLGTPKEIMTDVGEITGKPPMLPKWSLGFMNFEWDTNQTEFTNNVDTYRAKNIPIDAYAFDYDWKKYGETNYGEFAWNTTNFPSASTTSLKSTMDAKGIKMIGITKPRIVTKDASANVTTQGTDATNGGYFYPGHNEYQDYFIPVTVRSIDPYNANERAWFWNHSTDALNKGIVGWWNDETDKVSSGGALYWFGNFTTGHMSQTMYEGGRAYTSGAQRVWQTARTFYPGAQRYATTLWSGDIGIQYNKGERINWAAGMQEQRAVMLSSVNNGQVKWGMDTGGFNQQDGTTNNPNPDLYARWMQFSALTPVFRVHGNNHQQRQPWYFGSTAEEASKEAIQLRYSLIPYMYAYERSAYENGNGLVRPLMQAYPTDAAVKNYTDAWMFGDWLLAAPVVDKQQTSKDIYLPSGSWIDYARGNAITGGQTIRYSVNPDTLTDMPLFIKKGAIIPTQKVQDYVGQASVTSVDVDVFPDTTQSSFTYYDDDGASYNYESGTYFKQNMTAQDNGSGSLSFTLGAKSGSYTPALQSYIVKLHGSAGTSVTNNSAAMTSYASLEALKAAAGEGWATGKDIYGDVTYVKVTAGTASSKSIAVTGVAAVSATTSQYEAEDASLSGNSVAAKASINTNHTGYTGTGFVDGLGNDGAGVTFYPKVKTGGDYNVSLRYANASGTAKSVSIFVNGKRVKSTSLANLANWDTWSTQSETLPLTAGVNVVTYKYYSDAGDTGNVNIDNITVPFAPIIGKYEAESAELSGGSSLNTNHWYYSGTAFVDGLSAVGAQVKYNVNVPSAGSYQVALRYANGSAATKTLSTYINGAKLGQTSFTSPGTNWNVWQDNVQTVTLNAGANTIAFKYDAADSGNINVDRLLLSTSAAGTPVSEQNLLDNPGFERDTSQTNNWIEWHPGTQAVAFGVDSGSTTNPPESPWSGDKRAYFFAAGAYQQSIHQTISVPVNNVKYKFEAWVRMKNTTPTTARAEIQNYGGSAIYANISNSGVWKYISVSDIMVTNGQIDVGFYVDSPGGTTLHIDDVRVTKQ</sequence>
<gene>
    <name evidence="5" type="primary">ctsZ</name>
</gene>
<dbReference type="EC" id="2.4.1.24" evidence="4"/>
<dbReference type="EMBL" id="AB073929">
    <property type="protein sequence ID" value="BAB88404.1"/>
    <property type="molecule type" value="Genomic_DNA"/>
</dbReference>
<dbReference type="SMR" id="Q8RQU9"/>
<dbReference type="CAZy" id="CBM35">
    <property type="family name" value="Carbohydrate-Binding Module Family 35"/>
</dbReference>
<dbReference type="CAZy" id="CBM61">
    <property type="family name" value="Carbohydrate-Binding Module Family 61"/>
</dbReference>
<dbReference type="CAZy" id="GH31">
    <property type="family name" value="Glycoside Hydrolase Family 31"/>
</dbReference>
<dbReference type="BioCyc" id="MetaCyc:MONOMER-21807"/>
<dbReference type="GO" id="GO:0005576">
    <property type="term" value="C:extracellular region"/>
    <property type="evidence" value="ECO:0007669"/>
    <property type="project" value="UniProtKB-SubCell"/>
</dbReference>
<dbReference type="GO" id="GO:0030246">
    <property type="term" value="F:carbohydrate binding"/>
    <property type="evidence" value="ECO:0007669"/>
    <property type="project" value="InterPro"/>
</dbReference>
<dbReference type="GO" id="GO:0016757">
    <property type="term" value="F:glycosyltransferase activity"/>
    <property type="evidence" value="ECO:0007669"/>
    <property type="project" value="UniProtKB-KW"/>
</dbReference>
<dbReference type="GO" id="GO:0004553">
    <property type="term" value="F:hydrolase activity, hydrolyzing O-glycosyl compounds"/>
    <property type="evidence" value="ECO:0007669"/>
    <property type="project" value="InterPro"/>
</dbReference>
<dbReference type="GO" id="GO:0005975">
    <property type="term" value="P:carbohydrate metabolic process"/>
    <property type="evidence" value="ECO:0007669"/>
    <property type="project" value="InterPro"/>
</dbReference>
<dbReference type="CDD" id="cd04083">
    <property type="entry name" value="CBM35_Lmo2446-like"/>
    <property type="match status" value="2"/>
</dbReference>
<dbReference type="Gene3D" id="2.60.120.260">
    <property type="entry name" value="Galactose-binding domain-like"/>
    <property type="match status" value="3"/>
</dbReference>
<dbReference type="Gene3D" id="3.20.20.80">
    <property type="entry name" value="Glycosidases"/>
    <property type="match status" value="1"/>
</dbReference>
<dbReference type="Gene3D" id="2.60.40.1760">
    <property type="entry name" value="glycosyl hydrolase (family 31)"/>
    <property type="match status" value="1"/>
</dbReference>
<dbReference type="Gene3D" id="2.60.40.1180">
    <property type="entry name" value="Golgi alpha-mannosidase II"/>
    <property type="match status" value="2"/>
</dbReference>
<dbReference type="InterPro" id="IPR005084">
    <property type="entry name" value="CBM6"/>
</dbReference>
<dbReference type="InterPro" id="IPR033403">
    <property type="entry name" value="DUF5110"/>
</dbReference>
<dbReference type="InterPro" id="IPR011013">
    <property type="entry name" value="Gal_mutarotase_sf_dom"/>
</dbReference>
<dbReference type="InterPro" id="IPR008979">
    <property type="entry name" value="Galactose-bd-like_sf"/>
</dbReference>
<dbReference type="InterPro" id="IPR048395">
    <property type="entry name" value="Glyco_hydro_31_C"/>
</dbReference>
<dbReference type="InterPro" id="IPR000322">
    <property type="entry name" value="Glyco_hydro_31_TIM"/>
</dbReference>
<dbReference type="InterPro" id="IPR013780">
    <property type="entry name" value="Glyco_hydro_b"/>
</dbReference>
<dbReference type="InterPro" id="IPR017853">
    <property type="entry name" value="Glycoside_hydrolase_SF"/>
</dbReference>
<dbReference type="InterPro" id="IPR051816">
    <property type="entry name" value="Glycosyl_Hydrolase_31"/>
</dbReference>
<dbReference type="PANTHER" id="PTHR43863">
    <property type="entry name" value="HYDROLASE, PUTATIVE (AFU_ORTHOLOGUE AFUA_1G03140)-RELATED"/>
    <property type="match status" value="1"/>
</dbReference>
<dbReference type="PANTHER" id="PTHR43863:SF2">
    <property type="entry name" value="MALTASE-GLUCOAMYLASE"/>
    <property type="match status" value="1"/>
</dbReference>
<dbReference type="Pfam" id="PF16990">
    <property type="entry name" value="CBM_35"/>
    <property type="match status" value="2"/>
</dbReference>
<dbReference type="Pfam" id="PF17137">
    <property type="entry name" value="DUF5110"/>
    <property type="match status" value="1"/>
</dbReference>
<dbReference type="Pfam" id="PF01055">
    <property type="entry name" value="Glyco_hydro_31_2nd"/>
    <property type="match status" value="1"/>
</dbReference>
<dbReference type="Pfam" id="PF21365">
    <property type="entry name" value="Glyco_hydro_31_3rd"/>
    <property type="match status" value="1"/>
</dbReference>
<dbReference type="SUPFAM" id="SSF51445">
    <property type="entry name" value="(Trans)glycosidases"/>
    <property type="match status" value="1"/>
</dbReference>
<dbReference type="SUPFAM" id="SSF74650">
    <property type="entry name" value="Galactose mutarotase-like"/>
    <property type="match status" value="1"/>
</dbReference>
<dbReference type="SUPFAM" id="SSF49785">
    <property type="entry name" value="Galactose-binding domain-like"/>
    <property type="match status" value="3"/>
</dbReference>
<dbReference type="SUPFAM" id="SSF51011">
    <property type="entry name" value="Glycosyl hydrolase domain"/>
    <property type="match status" value="1"/>
</dbReference>
<dbReference type="PROSITE" id="PS51175">
    <property type="entry name" value="CBM6"/>
    <property type="match status" value="2"/>
</dbReference>
<reference key="1">
    <citation type="journal article" date="2002" name="Biosci. Biotechnol. Biochem.">
        <title>Cloning and sequencing of the genes encoding cyclic tetrasaccharide-synthesizing enzymes from Bacillus globisporus C11.</title>
        <authorList>
            <person name="Aga H."/>
            <person name="Maruta K."/>
            <person name="Yamamoto T."/>
            <person name="Kubota M."/>
            <person name="Fukuda S."/>
            <person name="Kurimoto M."/>
            <person name="Tsujisaka Y."/>
        </authorList>
    </citation>
    <scope>NUCLEOTIDE SEQUENCE [GENOMIC DNA]</scope>
    <scope>PROTEIN SEQUENCE OF 36-44; 279-295; 321-345; 367-399; 576-589; 632-651; 657-670; 823-832; 874-904; 938-964; 970-993 AND 1117-1141</scope>
    <scope>FUNCTION</scope>
    <scope>SUBCELLULAR LOCATION</scope>
    <scope>GENE CLUSTER</scope>
    <source>
        <strain>C11</strain>
    </source>
</reference>
<reference key="2">
    <citation type="journal article" date="2002" name="Biosci. Biotechnol. Biochem.">
        <title>Purification and characterization of glucosyltransferase and glucanotransferase involved in the production of cyclic tetrasaccharide in Bacillus globisporus C11.</title>
        <authorList>
            <person name="Nishimoto T."/>
            <person name="Aga H."/>
            <person name="Mukai K."/>
            <person name="Hashimoto T."/>
            <person name="Watanabe H."/>
            <person name="Kubota M."/>
            <person name="Fukuda S."/>
            <person name="Kurimoto M."/>
            <person name="Tsujisaka Y."/>
        </authorList>
    </citation>
    <scope>PROTEIN SEQUENCE OF 36-44</scope>
    <scope>FUNCTION</scope>
    <scope>CATALYTIC ACTIVITY</scope>
    <scope>ACTIVITY REGULATION</scope>
    <scope>BIOPHYSICOCHEMICAL PROPERTIES</scope>
    <source>
        <strain>C11</strain>
    </source>
</reference>
<feature type="signal peptide" evidence="3 4">
    <location>
        <begin position="1"/>
        <end position="35"/>
    </location>
</feature>
<feature type="chain" id="PRO_0000459724" description="1,6-alpha-glucosyltransferase">
    <location>
        <begin position="36"/>
        <end position="1284"/>
    </location>
</feature>
<feature type="domain" description="CBM6 1" evidence="2">
    <location>
        <begin position="856"/>
        <end position="988"/>
    </location>
</feature>
<feature type="domain" description="CBM6 2" evidence="2">
    <location>
        <begin position="994"/>
        <end position="1120"/>
    </location>
</feature>
<feature type="active site" description="Nucleophile" evidence="1">
    <location>
        <position position="433"/>
    </location>
</feature>
<feature type="active site" evidence="1">
    <location>
        <position position="436"/>
    </location>
</feature>
<feature type="active site" description="Proton donor" evidence="1">
    <location>
        <position position="495"/>
    </location>
</feature>
<name>CTSZ_SPOGL</name>
<comment type="function">
    <text evidence="3 4">Glycosyltransferase involved, together with CtsY, in the conversion of alpha-1,4-glucan into a cyclic tetrasaccharide (CTS) constructed from four alpha-glucopyranosyl residues (PubMed:12092816, PubMed:12400677). Catalyzes an intermolecular transglucosylation in which a glucose residue at the non-reducing end of maltotetraose is transferred to the 6-OH of an other non-reducing glucose, leading to the formation of alpha-isomaltosyl-(1-&gt;4)-D-maltotriose (PubMed:12400677). Has a wide substrate specificity, and acts on oligosaccharides with alpha-1,4-glucosidic linkages at the non-reducing end, except for maltose (PubMed:12400677). In contrast, has little activity toward oligosaccharides with alpha-1,6-glucosidic linkages at the non-reducing end (PubMed:12400677).</text>
</comment>
<comment type="catalytic activity">
    <reaction evidence="4">
        <text>2 D-maltotetraose = alpha-isomaltosyl-(1-&gt;4)-D-maltotriose + D-maltotriose</text>
        <dbReference type="Rhea" id="RHEA:70179"/>
        <dbReference type="ChEBI" id="CHEBI:140999"/>
        <dbReference type="ChEBI" id="CHEBI:143180"/>
        <dbReference type="ChEBI" id="CHEBI:186601"/>
    </reaction>
    <physiologicalReaction direction="left-to-right" evidence="4">
        <dbReference type="Rhea" id="RHEA:70180"/>
    </physiologicalReaction>
</comment>
<comment type="catalytic activity">
    <reaction evidence="4">
        <text>Transfers an alpha-D-glucosyl residue in a (1-&gt;4)-alpha-D-glucan to the primary hydroxy group of glucose, free or combined in a (1-&gt;4)-alpha-D-glucan.</text>
        <dbReference type="EC" id="2.4.1.24"/>
    </reaction>
</comment>
<comment type="activity regulation">
    <text evidence="4">Strongly activated and stabilized by various divalent cations (PubMed:12400677). Strongly inhibited by Cu(2+), Hg(2+) and EDTA, and moderately inhibited by Tris (PubMed:12400677).</text>
</comment>
<comment type="biophysicochemical properties">
    <phDependence>
        <text evidence="4">Optimum pH is 6.0 (PubMed:12400677). Stable in the pH range 5.5 to 10 (PubMed:12400677).</text>
    </phDependence>
    <temperatureDependence>
        <text evidence="4">Optimum temperature is 45 degrees Celsius.</text>
    </temperatureDependence>
</comment>
<comment type="subcellular location">
    <subcellularLocation>
        <location evidence="3">Secreted</location>
    </subcellularLocation>
</comment>
<comment type="induction">
    <text evidence="3">Part of the ctsUVWXYZ gene cluster, which contains genes for synthesis and transport of CTS.</text>
</comment>
<comment type="similarity">
    <text evidence="7">Belongs to the glycosyl hydrolase 31 family.</text>
</comment>
<accession>Q8RQU9</accession>
<evidence type="ECO:0000250" key="1">
    <source>
        <dbReference type="UniProtKB" id="P31434"/>
    </source>
</evidence>
<evidence type="ECO:0000255" key="2">
    <source>
        <dbReference type="PROSITE-ProRule" id="PRU00523"/>
    </source>
</evidence>
<evidence type="ECO:0000269" key="3">
    <source>
    </source>
</evidence>
<evidence type="ECO:0000269" key="4">
    <source>
    </source>
</evidence>
<evidence type="ECO:0000303" key="5">
    <source>
    </source>
</evidence>
<evidence type="ECO:0000303" key="6">
    <source>
    </source>
</evidence>
<evidence type="ECO:0000305" key="7"/>
<protein>
    <recommendedName>
        <fullName evidence="6">1,6-alpha-glucosyltransferase</fullName>
        <shortName evidence="6">6GT</shortName>
        <ecNumber evidence="4">2.4.1.24</ecNumber>
    </recommendedName>
    <alternativeName>
        <fullName evidence="5">6-glucosyltransferase</fullName>
    </alternativeName>
</protein>